<gene>
    <name evidence="1" type="primary">alaS</name>
    <name type="ordered locus">SAB1489c</name>
</gene>
<organism>
    <name type="scientific">Staphylococcus aureus (strain bovine RF122 / ET3-1)</name>
    <dbReference type="NCBI Taxonomy" id="273036"/>
    <lineage>
        <taxon>Bacteria</taxon>
        <taxon>Bacillati</taxon>
        <taxon>Bacillota</taxon>
        <taxon>Bacilli</taxon>
        <taxon>Bacillales</taxon>
        <taxon>Staphylococcaceae</taxon>
        <taxon>Staphylococcus</taxon>
    </lineage>
</organism>
<proteinExistence type="inferred from homology"/>
<sequence>MKKLKASEIRQKYLDFFVEKGHMVEPSAPLVPIDDDTLLWINSGVATLKKYFDGRETPKKPRIVNSQKAIRTNDIENVGFTARHHTFFEMLGNFSIGDYFKQEAIEFAWEFLTSDKWMGMEPDKLYVTIHPEDMEAYNIWHKDIGLEESRIIRIEGNFWDIGEGPSGPNTEIFYDRGEAYGQDDPAEEMYPGGENERYLEVWNLVFSEFNHNKDHSYTPLPNKNIDTGMGLERMASVSQNVRTNYETDLFMPIMNEIEKVSGKQYLVNNEQDVAFKVIADHIRTIAFAISDGALPANEGRGYVLRRLLRRAVRFSQTLGINEPFMYKLVDIVADIMEPYYPNVKEKADFIKRVIKSEEERFHETLEDGLAILNELIKKAKATTNEINGKDAFKLYDTYGFPIELTEEIAVQAGLKVDMTTFESEMQQQRDRARQARQNSQSMQVQSEVLKNITSASTFVGYDTATAQTTLTHLIYNGEEVSQVEAGETVYFMLTETPFYAVSGGQVADTGIVYNDNFEIAVSEVTKAPNGQNLHKGAVQFGQVNVGATVSAEVNQNDRRDIQKNHSATHLLHAALKSVLGDHVNQAGSLVEADRLRFDFSHFGPMTNDEIDQVERLVNEEIWKGIDVNIQEMDIASAKEMGAMALFGEKYGDVVRVVNMAPFSIELCGGIHVRNTSEIGLFKIVSESGTGAGVRRIEALTGKAAFLYLEDIQEKFNTMKSQMKVKSDDQVIDKLTQLQDEEKALLKQLEQRDKEITSLKMGNIEDQVEEINGYKVLVTEVDVPNAKAIRSTMDDFKSKLQDTIIILASNVDDKVSMVATVPKSLTNNVKAGDLIKQMAPIVSGKGGGRPDMAQGGGTQPENISKSLSFIKDYIKNL</sequence>
<accession>Q2YT60</accession>
<keyword id="KW-0030">Aminoacyl-tRNA synthetase</keyword>
<keyword id="KW-0067">ATP-binding</keyword>
<keyword id="KW-0963">Cytoplasm</keyword>
<keyword id="KW-0436">Ligase</keyword>
<keyword id="KW-0479">Metal-binding</keyword>
<keyword id="KW-0547">Nucleotide-binding</keyword>
<keyword id="KW-0648">Protein biosynthesis</keyword>
<keyword id="KW-0694">RNA-binding</keyword>
<keyword id="KW-0820">tRNA-binding</keyword>
<keyword id="KW-0862">Zinc</keyword>
<evidence type="ECO:0000255" key="1">
    <source>
        <dbReference type="HAMAP-Rule" id="MF_00036"/>
    </source>
</evidence>
<name>SYA_STAAB</name>
<reference key="1">
    <citation type="journal article" date="2007" name="PLoS ONE">
        <title>Molecular correlates of host specialization in Staphylococcus aureus.</title>
        <authorList>
            <person name="Herron-Olson L."/>
            <person name="Fitzgerald J.R."/>
            <person name="Musser J.M."/>
            <person name="Kapur V."/>
        </authorList>
    </citation>
    <scope>NUCLEOTIDE SEQUENCE [LARGE SCALE GENOMIC DNA]</scope>
    <source>
        <strain>bovine RF122 / ET3-1</strain>
    </source>
</reference>
<comment type="function">
    <text evidence="1">Catalyzes the attachment of alanine to tRNA(Ala) in a two-step reaction: alanine is first activated by ATP to form Ala-AMP and then transferred to the acceptor end of tRNA(Ala). Also edits incorrectly charged Ser-tRNA(Ala) and Gly-tRNA(Ala) via its editing domain.</text>
</comment>
<comment type="catalytic activity">
    <reaction evidence="1">
        <text>tRNA(Ala) + L-alanine + ATP = L-alanyl-tRNA(Ala) + AMP + diphosphate</text>
        <dbReference type="Rhea" id="RHEA:12540"/>
        <dbReference type="Rhea" id="RHEA-COMP:9657"/>
        <dbReference type="Rhea" id="RHEA-COMP:9923"/>
        <dbReference type="ChEBI" id="CHEBI:30616"/>
        <dbReference type="ChEBI" id="CHEBI:33019"/>
        <dbReference type="ChEBI" id="CHEBI:57972"/>
        <dbReference type="ChEBI" id="CHEBI:78442"/>
        <dbReference type="ChEBI" id="CHEBI:78497"/>
        <dbReference type="ChEBI" id="CHEBI:456215"/>
        <dbReference type="EC" id="6.1.1.7"/>
    </reaction>
</comment>
<comment type="cofactor">
    <cofactor evidence="1">
        <name>Zn(2+)</name>
        <dbReference type="ChEBI" id="CHEBI:29105"/>
    </cofactor>
    <text evidence="1">Binds 1 zinc ion per subunit.</text>
</comment>
<comment type="subcellular location">
    <subcellularLocation>
        <location evidence="1">Cytoplasm</location>
    </subcellularLocation>
</comment>
<comment type="domain">
    <text evidence="1">Consists of three domains; the N-terminal catalytic domain, the editing domain and the C-terminal C-Ala domain. The editing domain removes incorrectly charged amino acids, while the C-Ala domain, along with tRNA(Ala), serves as a bridge to cooperatively bring together the editing and aminoacylation centers thus stimulating deacylation of misacylated tRNAs.</text>
</comment>
<comment type="similarity">
    <text evidence="1">Belongs to the class-II aminoacyl-tRNA synthetase family.</text>
</comment>
<protein>
    <recommendedName>
        <fullName evidence="1">Alanine--tRNA ligase</fullName>
        <ecNumber evidence="1">6.1.1.7</ecNumber>
    </recommendedName>
    <alternativeName>
        <fullName evidence="1">Alanyl-tRNA synthetase</fullName>
        <shortName evidence="1">AlaRS</shortName>
    </alternativeName>
</protein>
<dbReference type="EC" id="6.1.1.7" evidence="1"/>
<dbReference type="EMBL" id="AJ938182">
    <property type="protein sequence ID" value="CAI81178.1"/>
    <property type="molecule type" value="Genomic_DNA"/>
</dbReference>
<dbReference type="RefSeq" id="WP_000734067.1">
    <property type="nucleotide sequence ID" value="NC_007622.1"/>
</dbReference>
<dbReference type="SMR" id="Q2YT60"/>
<dbReference type="KEGG" id="sab:SAB1489c"/>
<dbReference type="HOGENOM" id="CLU_004485_1_1_9"/>
<dbReference type="GO" id="GO:0005829">
    <property type="term" value="C:cytosol"/>
    <property type="evidence" value="ECO:0007669"/>
    <property type="project" value="TreeGrafter"/>
</dbReference>
<dbReference type="GO" id="GO:0004813">
    <property type="term" value="F:alanine-tRNA ligase activity"/>
    <property type="evidence" value="ECO:0007669"/>
    <property type="project" value="UniProtKB-UniRule"/>
</dbReference>
<dbReference type="GO" id="GO:0002161">
    <property type="term" value="F:aminoacyl-tRNA deacylase activity"/>
    <property type="evidence" value="ECO:0007669"/>
    <property type="project" value="TreeGrafter"/>
</dbReference>
<dbReference type="GO" id="GO:0005524">
    <property type="term" value="F:ATP binding"/>
    <property type="evidence" value="ECO:0007669"/>
    <property type="project" value="UniProtKB-UniRule"/>
</dbReference>
<dbReference type="GO" id="GO:0140096">
    <property type="term" value="F:catalytic activity, acting on a protein"/>
    <property type="evidence" value="ECO:0007669"/>
    <property type="project" value="UniProtKB-ARBA"/>
</dbReference>
<dbReference type="GO" id="GO:0016740">
    <property type="term" value="F:transferase activity"/>
    <property type="evidence" value="ECO:0007669"/>
    <property type="project" value="UniProtKB-ARBA"/>
</dbReference>
<dbReference type="GO" id="GO:0000049">
    <property type="term" value="F:tRNA binding"/>
    <property type="evidence" value="ECO:0007669"/>
    <property type="project" value="UniProtKB-KW"/>
</dbReference>
<dbReference type="GO" id="GO:0008270">
    <property type="term" value="F:zinc ion binding"/>
    <property type="evidence" value="ECO:0007669"/>
    <property type="project" value="UniProtKB-UniRule"/>
</dbReference>
<dbReference type="GO" id="GO:0006419">
    <property type="term" value="P:alanyl-tRNA aminoacylation"/>
    <property type="evidence" value="ECO:0007669"/>
    <property type="project" value="UniProtKB-UniRule"/>
</dbReference>
<dbReference type="CDD" id="cd00673">
    <property type="entry name" value="AlaRS_core"/>
    <property type="match status" value="1"/>
</dbReference>
<dbReference type="FunFam" id="2.40.30.130:FF:000001">
    <property type="entry name" value="Alanine--tRNA ligase"/>
    <property type="match status" value="1"/>
</dbReference>
<dbReference type="FunFam" id="3.10.310.40:FF:000001">
    <property type="entry name" value="Alanine--tRNA ligase"/>
    <property type="match status" value="1"/>
</dbReference>
<dbReference type="FunFam" id="3.30.54.20:FF:000001">
    <property type="entry name" value="Alanine--tRNA ligase"/>
    <property type="match status" value="1"/>
</dbReference>
<dbReference type="FunFam" id="3.30.930.10:FF:000046">
    <property type="entry name" value="Alanine--tRNA ligase"/>
    <property type="match status" value="1"/>
</dbReference>
<dbReference type="FunFam" id="3.30.980.10:FF:000004">
    <property type="entry name" value="Alanine--tRNA ligase, cytoplasmic"/>
    <property type="match status" value="1"/>
</dbReference>
<dbReference type="Gene3D" id="2.40.30.130">
    <property type="match status" value="1"/>
</dbReference>
<dbReference type="Gene3D" id="3.10.310.40">
    <property type="match status" value="1"/>
</dbReference>
<dbReference type="Gene3D" id="3.30.54.20">
    <property type="match status" value="1"/>
</dbReference>
<dbReference type="Gene3D" id="3.30.930.10">
    <property type="entry name" value="Bira Bifunctional Protein, Domain 2"/>
    <property type="match status" value="1"/>
</dbReference>
<dbReference type="Gene3D" id="3.30.980.10">
    <property type="entry name" value="Threonyl-trna Synthetase, Chain A, domain 2"/>
    <property type="match status" value="1"/>
</dbReference>
<dbReference type="HAMAP" id="MF_00036_B">
    <property type="entry name" value="Ala_tRNA_synth_B"/>
    <property type="match status" value="1"/>
</dbReference>
<dbReference type="InterPro" id="IPR045864">
    <property type="entry name" value="aa-tRNA-synth_II/BPL/LPL"/>
</dbReference>
<dbReference type="InterPro" id="IPR002318">
    <property type="entry name" value="Ala-tRNA-lgiase_IIc"/>
</dbReference>
<dbReference type="InterPro" id="IPR018162">
    <property type="entry name" value="Ala-tRNA-ligase_IIc_anticod-bd"/>
</dbReference>
<dbReference type="InterPro" id="IPR018165">
    <property type="entry name" value="Ala-tRNA-synth_IIc_core"/>
</dbReference>
<dbReference type="InterPro" id="IPR018164">
    <property type="entry name" value="Ala-tRNA-synth_IIc_N"/>
</dbReference>
<dbReference type="InterPro" id="IPR050058">
    <property type="entry name" value="Ala-tRNA_ligase"/>
</dbReference>
<dbReference type="InterPro" id="IPR023033">
    <property type="entry name" value="Ala_tRNA_ligase_euk/bac"/>
</dbReference>
<dbReference type="InterPro" id="IPR003156">
    <property type="entry name" value="DHHA1_dom"/>
</dbReference>
<dbReference type="InterPro" id="IPR018163">
    <property type="entry name" value="Thr/Ala-tRNA-synth_IIc_edit"/>
</dbReference>
<dbReference type="InterPro" id="IPR009000">
    <property type="entry name" value="Transl_B-barrel_sf"/>
</dbReference>
<dbReference type="InterPro" id="IPR012947">
    <property type="entry name" value="tRNA_SAD"/>
</dbReference>
<dbReference type="NCBIfam" id="TIGR00344">
    <property type="entry name" value="alaS"/>
    <property type="match status" value="1"/>
</dbReference>
<dbReference type="PANTHER" id="PTHR11777:SF9">
    <property type="entry name" value="ALANINE--TRNA LIGASE, CYTOPLASMIC"/>
    <property type="match status" value="1"/>
</dbReference>
<dbReference type="PANTHER" id="PTHR11777">
    <property type="entry name" value="ALANYL-TRNA SYNTHETASE"/>
    <property type="match status" value="1"/>
</dbReference>
<dbReference type="Pfam" id="PF02272">
    <property type="entry name" value="DHHA1"/>
    <property type="match status" value="1"/>
</dbReference>
<dbReference type="Pfam" id="PF01411">
    <property type="entry name" value="tRNA-synt_2c"/>
    <property type="match status" value="1"/>
</dbReference>
<dbReference type="Pfam" id="PF07973">
    <property type="entry name" value="tRNA_SAD"/>
    <property type="match status" value="1"/>
</dbReference>
<dbReference type="PRINTS" id="PR00980">
    <property type="entry name" value="TRNASYNTHALA"/>
</dbReference>
<dbReference type="SMART" id="SM00863">
    <property type="entry name" value="tRNA_SAD"/>
    <property type="match status" value="1"/>
</dbReference>
<dbReference type="SUPFAM" id="SSF55681">
    <property type="entry name" value="Class II aaRS and biotin synthetases"/>
    <property type="match status" value="1"/>
</dbReference>
<dbReference type="SUPFAM" id="SSF101353">
    <property type="entry name" value="Putative anticodon-binding domain of alanyl-tRNA synthetase (AlaRS)"/>
    <property type="match status" value="1"/>
</dbReference>
<dbReference type="SUPFAM" id="SSF55186">
    <property type="entry name" value="ThrRS/AlaRS common domain"/>
    <property type="match status" value="1"/>
</dbReference>
<dbReference type="SUPFAM" id="SSF50447">
    <property type="entry name" value="Translation proteins"/>
    <property type="match status" value="1"/>
</dbReference>
<dbReference type="PROSITE" id="PS50860">
    <property type="entry name" value="AA_TRNA_LIGASE_II_ALA"/>
    <property type="match status" value="1"/>
</dbReference>
<feature type="chain" id="PRO_0000347808" description="Alanine--tRNA ligase">
    <location>
        <begin position="1"/>
        <end position="876"/>
    </location>
</feature>
<feature type="binding site" evidence="1">
    <location>
        <position position="565"/>
    </location>
    <ligand>
        <name>Zn(2+)</name>
        <dbReference type="ChEBI" id="CHEBI:29105"/>
    </ligand>
</feature>
<feature type="binding site" evidence="1">
    <location>
        <position position="569"/>
    </location>
    <ligand>
        <name>Zn(2+)</name>
        <dbReference type="ChEBI" id="CHEBI:29105"/>
    </ligand>
</feature>
<feature type="binding site" evidence="1">
    <location>
        <position position="667"/>
    </location>
    <ligand>
        <name>Zn(2+)</name>
        <dbReference type="ChEBI" id="CHEBI:29105"/>
    </ligand>
</feature>
<feature type="binding site" evidence="1">
    <location>
        <position position="671"/>
    </location>
    <ligand>
        <name>Zn(2+)</name>
        <dbReference type="ChEBI" id="CHEBI:29105"/>
    </ligand>
</feature>